<protein>
    <recommendedName>
        <fullName evidence="1">Carbohydrate deacetylase 2</fullName>
        <ecNumber evidence="1">3.5.1.-</ecNumber>
    </recommendedName>
</protein>
<gene>
    <name type="ordered locus">lin2456</name>
</gene>
<feature type="chain" id="PRO_0000051594" description="Carbohydrate deacetylase 2">
    <location>
        <begin position="1"/>
        <end position="248"/>
    </location>
</feature>
<feature type="binding site" evidence="1">
    <location>
        <position position="59"/>
    </location>
    <ligand>
        <name>Mg(2+)</name>
        <dbReference type="ChEBI" id="CHEBI:18420"/>
    </ligand>
</feature>
<feature type="binding site" evidence="1">
    <location>
        <position position="123"/>
    </location>
    <ligand>
        <name>Mg(2+)</name>
        <dbReference type="ChEBI" id="CHEBI:18420"/>
    </ligand>
</feature>
<evidence type="ECO:0000255" key="1">
    <source>
        <dbReference type="HAMAP-Rule" id="MF_01246"/>
    </source>
</evidence>
<comment type="function">
    <text evidence="1">Probably catalyzes the deacetylation of acetylated carbohydrates an important step in the degradation of oligosaccharides.</text>
</comment>
<comment type="cofactor">
    <cofactor evidence="1">
        <name>Mg(2+)</name>
        <dbReference type="ChEBI" id="CHEBI:18420"/>
    </cofactor>
</comment>
<comment type="subunit">
    <text evidence="1">Homodimer.</text>
</comment>
<comment type="similarity">
    <text evidence="1">Belongs to the YdjC deacetylase family.</text>
</comment>
<dbReference type="EC" id="3.5.1.-" evidence="1"/>
<dbReference type="EMBL" id="AL596172">
    <property type="protein sequence ID" value="CAC97683.1"/>
    <property type="molecule type" value="Genomic_DNA"/>
</dbReference>
<dbReference type="PIR" id="AC1739">
    <property type="entry name" value="AC1739"/>
</dbReference>
<dbReference type="RefSeq" id="WP_010991202.1">
    <property type="nucleotide sequence ID" value="NC_003212.1"/>
</dbReference>
<dbReference type="SMR" id="Q928S6"/>
<dbReference type="STRING" id="272626.gene:17566817"/>
<dbReference type="DNASU" id="1131244"/>
<dbReference type="GeneID" id="93235747"/>
<dbReference type="KEGG" id="lin:lin2456"/>
<dbReference type="eggNOG" id="COG3394">
    <property type="taxonomic scope" value="Bacteria"/>
</dbReference>
<dbReference type="HOGENOM" id="CLU_064244_4_0_9"/>
<dbReference type="OrthoDB" id="9774177at2"/>
<dbReference type="Proteomes" id="UP000002513">
    <property type="component" value="Chromosome"/>
</dbReference>
<dbReference type="GO" id="GO:0019213">
    <property type="term" value="F:deacetylase activity"/>
    <property type="evidence" value="ECO:0007669"/>
    <property type="project" value="TreeGrafter"/>
</dbReference>
<dbReference type="GO" id="GO:0016811">
    <property type="term" value="F:hydrolase activity, acting on carbon-nitrogen (but not peptide) bonds, in linear amides"/>
    <property type="evidence" value="ECO:0007669"/>
    <property type="project" value="UniProtKB-UniRule"/>
</dbReference>
<dbReference type="GO" id="GO:0046872">
    <property type="term" value="F:metal ion binding"/>
    <property type="evidence" value="ECO:0007669"/>
    <property type="project" value="UniProtKB-KW"/>
</dbReference>
<dbReference type="GO" id="GO:0000272">
    <property type="term" value="P:polysaccharide catabolic process"/>
    <property type="evidence" value="ECO:0007669"/>
    <property type="project" value="InterPro"/>
</dbReference>
<dbReference type="CDD" id="cd10803">
    <property type="entry name" value="YdjC_EF3048_like"/>
    <property type="match status" value="1"/>
</dbReference>
<dbReference type="Gene3D" id="3.20.20.370">
    <property type="entry name" value="Glycoside hydrolase/deacetylase"/>
    <property type="match status" value="1"/>
</dbReference>
<dbReference type="HAMAP" id="MF_01246">
    <property type="entry name" value="COD"/>
    <property type="match status" value="1"/>
</dbReference>
<dbReference type="InterPro" id="IPR022948">
    <property type="entry name" value="COD_ChbG_bac"/>
</dbReference>
<dbReference type="InterPro" id="IPR011330">
    <property type="entry name" value="Glyco_hydro/deAcase_b/a-brl"/>
</dbReference>
<dbReference type="InterPro" id="IPR006879">
    <property type="entry name" value="YdjC-like"/>
</dbReference>
<dbReference type="PANTHER" id="PTHR31609:SF1">
    <property type="entry name" value="CARBOHYDRATE DEACETYLASE"/>
    <property type="match status" value="1"/>
</dbReference>
<dbReference type="PANTHER" id="PTHR31609">
    <property type="entry name" value="YDJC DEACETYLASE FAMILY MEMBER"/>
    <property type="match status" value="1"/>
</dbReference>
<dbReference type="Pfam" id="PF04794">
    <property type="entry name" value="YdjC"/>
    <property type="match status" value="1"/>
</dbReference>
<dbReference type="SUPFAM" id="SSF88713">
    <property type="entry name" value="Glycoside hydrolase/deacetylase"/>
    <property type="match status" value="1"/>
</dbReference>
<proteinExistence type="inferred from homology"/>
<organism>
    <name type="scientific">Listeria innocua serovar 6a (strain ATCC BAA-680 / CLIP 11262)</name>
    <dbReference type="NCBI Taxonomy" id="272626"/>
    <lineage>
        <taxon>Bacteria</taxon>
        <taxon>Bacillati</taxon>
        <taxon>Bacillota</taxon>
        <taxon>Bacilli</taxon>
        <taxon>Bacillales</taxon>
        <taxon>Listeriaceae</taxon>
        <taxon>Listeria</taxon>
    </lineage>
</organism>
<name>YDJC2_LISIN</name>
<sequence length="248" mass="28461">MKLIINADDFGFTRAINYGIIDAHNLGVLTSTTLMVTMPAFEHAVDLSKKTPTLGIGLHLNLTLGKPLTNGATLVNEDGELIKPKFTTPEYPYNEEEVYQEFKAQYHRFTEFMKKKPSHLDSHLFSTDIYPVVTSAAKRLAEEIGIPLRNHDTKGFEHVEFMWEKPLEIPYGEYDNLDYIYDNAASILCYDYVEIMTHPGYLDTFILENSTFSTPRANELESLISPRMRQFLNENNVELISYHDIPKK</sequence>
<reference key="1">
    <citation type="journal article" date="2001" name="Science">
        <title>Comparative genomics of Listeria species.</title>
        <authorList>
            <person name="Glaser P."/>
            <person name="Frangeul L."/>
            <person name="Buchrieser C."/>
            <person name="Rusniok C."/>
            <person name="Amend A."/>
            <person name="Baquero F."/>
            <person name="Berche P."/>
            <person name="Bloecker H."/>
            <person name="Brandt P."/>
            <person name="Chakraborty T."/>
            <person name="Charbit A."/>
            <person name="Chetouani F."/>
            <person name="Couve E."/>
            <person name="de Daruvar A."/>
            <person name="Dehoux P."/>
            <person name="Domann E."/>
            <person name="Dominguez-Bernal G."/>
            <person name="Duchaud E."/>
            <person name="Durant L."/>
            <person name="Dussurget O."/>
            <person name="Entian K.-D."/>
            <person name="Fsihi H."/>
            <person name="Garcia-del Portillo F."/>
            <person name="Garrido P."/>
            <person name="Gautier L."/>
            <person name="Goebel W."/>
            <person name="Gomez-Lopez N."/>
            <person name="Hain T."/>
            <person name="Hauf J."/>
            <person name="Jackson D."/>
            <person name="Jones L.-M."/>
            <person name="Kaerst U."/>
            <person name="Kreft J."/>
            <person name="Kuhn M."/>
            <person name="Kunst F."/>
            <person name="Kurapkat G."/>
            <person name="Madueno E."/>
            <person name="Maitournam A."/>
            <person name="Mata Vicente J."/>
            <person name="Ng E."/>
            <person name="Nedjari H."/>
            <person name="Nordsiek G."/>
            <person name="Novella S."/>
            <person name="de Pablos B."/>
            <person name="Perez-Diaz J.-C."/>
            <person name="Purcell R."/>
            <person name="Remmel B."/>
            <person name="Rose M."/>
            <person name="Schlueter T."/>
            <person name="Simoes N."/>
            <person name="Tierrez A."/>
            <person name="Vazquez-Boland J.-A."/>
            <person name="Voss H."/>
            <person name="Wehland J."/>
            <person name="Cossart P."/>
        </authorList>
    </citation>
    <scope>NUCLEOTIDE SEQUENCE [LARGE SCALE GENOMIC DNA]</scope>
    <source>
        <strain>ATCC BAA-680 / CLIP 11262</strain>
    </source>
</reference>
<keyword id="KW-0119">Carbohydrate metabolism</keyword>
<keyword id="KW-0378">Hydrolase</keyword>
<keyword id="KW-0460">Magnesium</keyword>
<keyword id="KW-0479">Metal-binding</keyword>
<accession>Q928S6</accession>